<feature type="chain" id="PRO_0000326100" description="Post-GPI attachment to proteins factor 2">
    <location>
        <begin position="1"/>
        <end position="263"/>
    </location>
</feature>
<feature type="transmembrane region" description="Helical" evidence="2">
    <location>
        <begin position="16"/>
        <end position="36"/>
    </location>
</feature>
<feature type="transmembrane region" description="Helical" evidence="2">
    <location>
        <begin position="69"/>
        <end position="89"/>
    </location>
</feature>
<feature type="transmembrane region" description="Helical" evidence="2">
    <location>
        <begin position="109"/>
        <end position="129"/>
    </location>
</feature>
<feature type="transmembrane region" description="Helical" evidence="2">
    <location>
        <begin position="143"/>
        <end position="163"/>
    </location>
</feature>
<feature type="transmembrane region" description="Helical" evidence="2">
    <location>
        <begin position="180"/>
        <end position="200"/>
    </location>
</feature>
<feature type="transmembrane region" description="Helical" evidence="2">
    <location>
        <begin position="208"/>
        <end position="228"/>
    </location>
</feature>
<proteinExistence type="inferred from homology"/>
<comment type="function">
    <text evidence="1">Involved in the lipid remodeling steps of GPI-anchor maturation. Required for stable expression of GPI-anchored proteins at the cell surface (By similarity).</text>
</comment>
<comment type="subcellular location">
    <subcellularLocation>
        <location evidence="1">Golgi apparatus membrane</location>
        <topology evidence="1">Multi-pass membrane protein</topology>
    </subcellularLocation>
    <subcellularLocation>
        <location evidence="1">Endoplasmic reticulum membrane</location>
        <topology evidence="1">Multi-pass membrane protein</topology>
    </subcellularLocation>
</comment>
<comment type="similarity">
    <text evidence="3">Belongs to the PGAP2 family.</text>
</comment>
<name>PGAP2_CAEBR</name>
<organism>
    <name type="scientific">Caenorhabditis briggsae</name>
    <dbReference type="NCBI Taxonomy" id="6238"/>
    <lineage>
        <taxon>Eukaryota</taxon>
        <taxon>Metazoa</taxon>
        <taxon>Ecdysozoa</taxon>
        <taxon>Nematoda</taxon>
        <taxon>Chromadorea</taxon>
        <taxon>Rhabditida</taxon>
        <taxon>Rhabditina</taxon>
        <taxon>Rhabditomorpha</taxon>
        <taxon>Rhabditoidea</taxon>
        <taxon>Rhabditidae</taxon>
        <taxon>Peloderinae</taxon>
        <taxon>Caenorhabditis</taxon>
    </lineage>
</organism>
<gene>
    <name evidence="4" type="primary">pgap-2</name>
    <name evidence="4" type="synonym">tag-189</name>
    <name evidence="4" type="ORF">CBG18005</name>
</gene>
<sequence length="263" mass="29591">MALGEDDILSVPFKYFVFCIGGLPSSALLICVLLSLFLHFDQATSTHCEVANWLPSISAAVSTYTPEKYIWRILIGLHIGPRLVVAVAFRNFLMSSPLRPYTGSKQFKFLCNIACGLNLLENFFLLALTSISSSEDHSLHAKCFGGFAISSIIYMILSTWLFSESGRRRATNLGERSYEYKILGASIFVVCFFLGGYLYWRHNTYCEPGIYTLFALVEYSAVLSNIFFHCTLYYDFHGKNIALTSSFGSSHYNLLPTQIEKDT</sequence>
<protein>
    <recommendedName>
        <fullName>Post-GPI attachment to proteins factor 2</fullName>
    </recommendedName>
</protein>
<keyword id="KW-0256">Endoplasmic reticulum</keyword>
<keyword id="KW-0333">Golgi apparatus</keyword>
<keyword id="KW-0337">GPI-anchor biosynthesis</keyword>
<keyword id="KW-0472">Membrane</keyword>
<keyword id="KW-1185">Reference proteome</keyword>
<keyword id="KW-0812">Transmembrane</keyword>
<keyword id="KW-1133">Transmembrane helix</keyword>
<dbReference type="EMBL" id="HE600963">
    <property type="protein sequence ID" value="CAP35533.2"/>
    <property type="molecule type" value="Genomic_DNA"/>
</dbReference>
<dbReference type="FunCoup" id="A8XST1">
    <property type="interactions" value="1379"/>
</dbReference>
<dbReference type="STRING" id="6238.A8XST1"/>
<dbReference type="EnsemblMetazoa" id="CBG18005.1">
    <property type="protein sequence ID" value="CBG18005.1"/>
    <property type="gene ID" value="WBGene00037503"/>
</dbReference>
<dbReference type="WormBase" id="CBG18005">
    <property type="protein sequence ID" value="CBP25893"/>
    <property type="gene ID" value="WBGene00037503"/>
    <property type="gene designation" value="Cbr-pgap-2"/>
</dbReference>
<dbReference type="eggNOG" id="KOG3979">
    <property type="taxonomic scope" value="Eukaryota"/>
</dbReference>
<dbReference type="HOGENOM" id="CLU_061191_1_0_1"/>
<dbReference type="InParanoid" id="A8XST1"/>
<dbReference type="OMA" id="FHFTAFW"/>
<dbReference type="Proteomes" id="UP000008549">
    <property type="component" value="Unassembled WGS sequence"/>
</dbReference>
<dbReference type="GO" id="GO:0005789">
    <property type="term" value="C:endoplasmic reticulum membrane"/>
    <property type="evidence" value="ECO:0000250"/>
    <property type="project" value="UniProtKB"/>
</dbReference>
<dbReference type="GO" id="GO:0000139">
    <property type="term" value="C:Golgi membrane"/>
    <property type="evidence" value="ECO:0000250"/>
    <property type="project" value="UniProtKB"/>
</dbReference>
<dbReference type="GO" id="GO:0006506">
    <property type="term" value="P:GPI anchor biosynthetic process"/>
    <property type="evidence" value="ECO:0000250"/>
    <property type="project" value="UniProtKB"/>
</dbReference>
<dbReference type="InterPro" id="IPR019402">
    <property type="entry name" value="Frag1/DRAM/Sfk1"/>
</dbReference>
<dbReference type="InterPro" id="IPR039545">
    <property type="entry name" value="PGAP2"/>
</dbReference>
<dbReference type="PANTHER" id="PTHR12892">
    <property type="entry name" value="FGF RECEPTOR ACTIVATING PROTEIN 1"/>
    <property type="match status" value="1"/>
</dbReference>
<dbReference type="PANTHER" id="PTHR12892:SF11">
    <property type="entry name" value="POST-GPI ATTACHMENT TO PROTEINS FACTOR 2"/>
    <property type="match status" value="1"/>
</dbReference>
<dbReference type="Pfam" id="PF10277">
    <property type="entry name" value="Frag1"/>
    <property type="match status" value="1"/>
</dbReference>
<accession>A8XST1</accession>
<reference key="1">
    <citation type="journal article" date="2003" name="PLoS Biol.">
        <title>The genome sequence of Caenorhabditis briggsae: a platform for comparative genomics.</title>
        <authorList>
            <person name="Stein L.D."/>
            <person name="Bao Z."/>
            <person name="Blasiar D."/>
            <person name="Blumenthal T."/>
            <person name="Brent M.R."/>
            <person name="Chen N."/>
            <person name="Chinwalla A."/>
            <person name="Clarke L."/>
            <person name="Clee C."/>
            <person name="Coghlan A."/>
            <person name="Coulson A."/>
            <person name="D'Eustachio P."/>
            <person name="Fitch D.H.A."/>
            <person name="Fulton L.A."/>
            <person name="Fulton R.E."/>
            <person name="Griffiths-Jones S."/>
            <person name="Harris T.W."/>
            <person name="Hillier L.W."/>
            <person name="Kamath R."/>
            <person name="Kuwabara P.E."/>
            <person name="Mardis E.R."/>
            <person name="Marra M.A."/>
            <person name="Miner T.L."/>
            <person name="Minx P."/>
            <person name="Mullikin J.C."/>
            <person name="Plumb R.W."/>
            <person name="Rogers J."/>
            <person name="Schein J.E."/>
            <person name="Sohrmann M."/>
            <person name="Spieth J."/>
            <person name="Stajich J.E."/>
            <person name="Wei C."/>
            <person name="Willey D."/>
            <person name="Wilson R.K."/>
            <person name="Durbin R.M."/>
            <person name="Waterston R.H."/>
        </authorList>
    </citation>
    <scope>NUCLEOTIDE SEQUENCE [LARGE SCALE GENOMIC DNA]</scope>
    <source>
        <strain>AF16</strain>
    </source>
</reference>
<evidence type="ECO:0000250" key="1"/>
<evidence type="ECO:0000255" key="2"/>
<evidence type="ECO:0000305" key="3"/>
<evidence type="ECO:0000312" key="4">
    <source>
        <dbReference type="WormBase" id="CBG18005"/>
    </source>
</evidence>